<comment type="function">
    <text evidence="6">Hemoprotein that functions as an electron carrier for membrane bound monooxygenases involved in sterol biosynthesis.</text>
</comment>
<comment type="subunit">
    <text evidence="3">Interacts with alternative squalene epoxidase PHATRDRAFT_45494.</text>
</comment>
<comment type="subcellular location">
    <subcellularLocation>
        <location evidence="6">Endoplasmic reticulum membrane</location>
        <topology evidence="1">Single-pass membrane protein</topology>
    </subcellularLocation>
</comment>
<comment type="similarity">
    <text evidence="5">Belongs to the cytochrome b5 family.</text>
</comment>
<accession>B7GCG7</accession>
<reference key="1">
    <citation type="journal article" date="2019" name="Nat. Microbiol.">
        <title>A widespread alternative squalene epoxidase participates in eukaryote steroid biosynthesis.</title>
        <authorList>
            <person name="Pollier J."/>
            <person name="Vancaester E."/>
            <person name="Kuzhiumparambil U."/>
            <person name="Vickers C.E."/>
            <person name="Vandepoele K."/>
            <person name="Goossens A."/>
            <person name="Fabris M."/>
        </authorList>
    </citation>
    <scope>NUCLEOTIDE SEQUENCE [MRNA]</scope>
    <scope>INTERACTION WITH PHATRDRAFT_45494</scope>
    <scope>FUNCTION</scope>
    <scope>SUBCELLULAR LOCATION</scope>
    <source>
        <strain>CCAP 1055/1</strain>
    </source>
</reference>
<reference key="2">
    <citation type="journal article" date="2008" name="Nature">
        <title>The Phaeodactylum genome reveals the evolutionary history of diatom genomes.</title>
        <authorList>
            <person name="Bowler C."/>
            <person name="Allen A.E."/>
            <person name="Badger J.H."/>
            <person name="Grimwood J."/>
            <person name="Jabbari K."/>
            <person name="Kuo A."/>
            <person name="Maheswari U."/>
            <person name="Martens C."/>
            <person name="Maumus F."/>
            <person name="Otillar R.P."/>
            <person name="Rayko E."/>
            <person name="Salamov A."/>
            <person name="Vandepoele K."/>
            <person name="Beszteri B."/>
            <person name="Gruber A."/>
            <person name="Heijde M."/>
            <person name="Katinka M."/>
            <person name="Mock T."/>
            <person name="Valentin K."/>
            <person name="Verret F."/>
            <person name="Berges J.A."/>
            <person name="Brownlee C."/>
            <person name="Cadoret J.P."/>
            <person name="Chiovitti A."/>
            <person name="Choi C.J."/>
            <person name="Coesel S."/>
            <person name="De Martino A."/>
            <person name="Detter J.C."/>
            <person name="Durkin C."/>
            <person name="Falciatore A."/>
            <person name="Fournet J."/>
            <person name="Haruta M."/>
            <person name="Huysman M.J."/>
            <person name="Jenkins B.D."/>
            <person name="Jiroutova K."/>
            <person name="Jorgensen R.E."/>
            <person name="Joubert Y."/>
            <person name="Kaplan A."/>
            <person name="Kroger N."/>
            <person name="Kroth P.G."/>
            <person name="La Roche J."/>
            <person name="Lindquist E."/>
            <person name="Lommer M."/>
            <person name="Martin-Jezequel V."/>
            <person name="Lopez P.J."/>
            <person name="Lucas S."/>
            <person name="Mangogna M."/>
            <person name="McGinnis K."/>
            <person name="Medlin L.K."/>
            <person name="Montsant A."/>
            <person name="Oudot-Le Secq M.P."/>
            <person name="Napoli C."/>
            <person name="Obornik M."/>
            <person name="Parker M.S."/>
            <person name="Petit J.L."/>
            <person name="Porcel B.M."/>
            <person name="Poulsen N."/>
            <person name="Robison M."/>
            <person name="Rychlewski L."/>
            <person name="Rynearson T.A."/>
            <person name="Schmutz J."/>
            <person name="Shapiro H."/>
            <person name="Siaut M."/>
            <person name="Stanley M."/>
            <person name="Sussman M.R."/>
            <person name="Taylor A.R."/>
            <person name="Vardi A."/>
            <person name="von Dassow P."/>
            <person name="Vyverman W."/>
            <person name="Willis A."/>
            <person name="Wyrwicz L.S."/>
            <person name="Rokhsar D.S."/>
            <person name="Weissenbach J."/>
            <person name="Armbrust E.V."/>
            <person name="Green B.R."/>
            <person name="Van de Peer Y."/>
            <person name="Grigoriev I.V."/>
        </authorList>
    </citation>
    <scope>NUCLEOTIDE SEQUENCE [LARGE SCALE GENOMIC DNA]</scope>
    <source>
        <strain>CCAP 1055/1</strain>
    </source>
</reference>
<name>CYB5_PHATC</name>
<proteinExistence type="evidence at protein level"/>
<keyword id="KW-0249">Electron transport</keyword>
<keyword id="KW-0256">Endoplasmic reticulum</keyword>
<keyword id="KW-0349">Heme</keyword>
<keyword id="KW-0408">Iron</keyword>
<keyword id="KW-0472">Membrane</keyword>
<keyword id="KW-0479">Metal-binding</keyword>
<keyword id="KW-1185">Reference proteome</keyword>
<keyword id="KW-0812">Transmembrane</keyword>
<keyword id="KW-1133">Transmembrane helix</keyword>
<keyword id="KW-0813">Transport</keyword>
<protein>
    <recommendedName>
        <fullName evidence="4">Cytochrome b5</fullName>
    </recommendedName>
</protein>
<gene>
    <name type="ORF">PHATRDRAFT_30770</name>
</gene>
<dbReference type="EMBL" id="MH422132">
    <property type="protein sequence ID" value="AYI99265.1"/>
    <property type="molecule type" value="mRNA"/>
</dbReference>
<dbReference type="EMBL" id="CM000627">
    <property type="protein sequence ID" value="EEC43865.1"/>
    <property type="molecule type" value="Genomic_DNA"/>
</dbReference>
<dbReference type="RefSeq" id="XP_002184806.1">
    <property type="nucleotide sequence ID" value="XM_002184770.1"/>
</dbReference>
<dbReference type="SMR" id="B7GCG7"/>
<dbReference type="STRING" id="556484.B7GCG7"/>
<dbReference type="PaxDb" id="2850-Phatr30770"/>
<dbReference type="EnsemblProtists" id="Phatr3_J30770.t1">
    <property type="protein sequence ID" value="Phatr3_J30770.p1"/>
    <property type="gene ID" value="Phatr3_J30770"/>
</dbReference>
<dbReference type="GeneID" id="7198555"/>
<dbReference type="KEGG" id="pti:PHATRDRAFT_30770"/>
<dbReference type="eggNOG" id="KOG0537">
    <property type="taxonomic scope" value="Eukaryota"/>
</dbReference>
<dbReference type="HOGENOM" id="CLU_102602_3_0_1"/>
<dbReference type="InParanoid" id="B7GCG7"/>
<dbReference type="OMA" id="VGHSPHA"/>
<dbReference type="OrthoDB" id="260519at2759"/>
<dbReference type="Proteomes" id="UP000000759">
    <property type="component" value="Chromosome 25"/>
</dbReference>
<dbReference type="GO" id="GO:0005789">
    <property type="term" value="C:endoplasmic reticulum membrane"/>
    <property type="evidence" value="ECO:0007669"/>
    <property type="project" value="UniProtKB-SubCell"/>
</dbReference>
<dbReference type="GO" id="GO:0020037">
    <property type="term" value="F:heme binding"/>
    <property type="evidence" value="ECO:0007669"/>
    <property type="project" value="InterPro"/>
</dbReference>
<dbReference type="GO" id="GO:0046872">
    <property type="term" value="F:metal ion binding"/>
    <property type="evidence" value="ECO:0007669"/>
    <property type="project" value="UniProtKB-KW"/>
</dbReference>
<dbReference type="FunFam" id="3.10.120.10:FF:000002">
    <property type="entry name" value="Cytochrome b5 type B"/>
    <property type="match status" value="1"/>
</dbReference>
<dbReference type="Gene3D" id="3.10.120.10">
    <property type="entry name" value="Cytochrome b5-like heme/steroid binding domain"/>
    <property type="match status" value="1"/>
</dbReference>
<dbReference type="InterPro" id="IPR001199">
    <property type="entry name" value="Cyt_B5-like_heme/steroid-bd"/>
</dbReference>
<dbReference type="InterPro" id="IPR036400">
    <property type="entry name" value="Cyt_B5-like_heme/steroid_sf"/>
</dbReference>
<dbReference type="InterPro" id="IPR018506">
    <property type="entry name" value="Cyt_B5_heme-BS"/>
</dbReference>
<dbReference type="InterPro" id="IPR050668">
    <property type="entry name" value="Cytochrome_b5"/>
</dbReference>
<dbReference type="PANTHER" id="PTHR19359">
    <property type="entry name" value="CYTOCHROME B5"/>
    <property type="match status" value="1"/>
</dbReference>
<dbReference type="PANTHER" id="PTHR19359:SF14">
    <property type="entry name" value="CYTOCHROME B5 A"/>
    <property type="match status" value="1"/>
</dbReference>
<dbReference type="Pfam" id="PF00173">
    <property type="entry name" value="Cyt-b5"/>
    <property type="match status" value="1"/>
</dbReference>
<dbReference type="PRINTS" id="PR00363">
    <property type="entry name" value="CYTOCHROMEB5"/>
</dbReference>
<dbReference type="SMART" id="SM01117">
    <property type="entry name" value="Cyt-b5"/>
    <property type="match status" value="1"/>
</dbReference>
<dbReference type="SUPFAM" id="SSF55856">
    <property type="entry name" value="Cytochrome b5-like heme/steroid binding domain"/>
    <property type="match status" value="1"/>
</dbReference>
<dbReference type="PROSITE" id="PS00191">
    <property type="entry name" value="CYTOCHROME_B5_1"/>
    <property type="match status" value="1"/>
</dbReference>
<dbReference type="PROSITE" id="PS50255">
    <property type="entry name" value="CYTOCHROME_B5_2"/>
    <property type="match status" value="1"/>
</dbReference>
<feature type="chain" id="PRO_0000446441" description="Cytochrome b5">
    <location>
        <begin position="1"/>
        <end position="133"/>
    </location>
</feature>
<feature type="transmembrane region" description="Helical" evidence="1">
    <location>
        <begin position="108"/>
        <end position="128"/>
    </location>
</feature>
<feature type="domain" description="Cytochrome b5 heme-binding" evidence="2">
    <location>
        <begin position="4"/>
        <end position="86"/>
    </location>
</feature>
<feature type="binding site" description="axial binding residue" evidence="2">
    <location>
        <position position="45"/>
    </location>
    <ligand>
        <name>heme</name>
        <dbReference type="ChEBI" id="CHEBI:30413"/>
    </ligand>
    <ligandPart>
        <name>Fe</name>
        <dbReference type="ChEBI" id="CHEBI:18248"/>
    </ligandPart>
</feature>
<feature type="binding site" description="axial binding residue" evidence="2">
    <location>
        <position position="69"/>
    </location>
    <ligand>
        <name>heme</name>
        <dbReference type="ChEBI" id="CHEBI:30413"/>
    </ligand>
    <ligandPart>
        <name>Fe</name>
        <dbReference type="ChEBI" id="CHEBI:18248"/>
    </ligandPart>
</feature>
<organism>
    <name type="scientific">Phaeodactylum tricornutum (strain CCAP 1055/1)</name>
    <dbReference type="NCBI Taxonomy" id="556484"/>
    <lineage>
        <taxon>Eukaryota</taxon>
        <taxon>Sar</taxon>
        <taxon>Stramenopiles</taxon>
        <taxon>Ochrophyta</taxon>
        <taxon>Bacillariophyta</taxon>
        <taxon>Bacillariophyceae</taxon>
        <taxon>Bacillariophycidae</taxon>
        <taxon>Naviculales</taxon>
        <taxon>Phaeodactylaceae</taxon>
        <taxon>Phaeodactylum</taxon>
    </lineage>
</organism>
<evidence type="ECO:0000255" key="1"/>
<evidence type="ECO:0000255" key="2">
    <source>
        <dbReference type="PROSITE-ProRule" id="PRU00279"/>
    </source>
</evidence>
<evidence type="ECO:0000269" key="3">
    <source>
    </source>
</evidence>
<evidence type="ECO:0000303" key="4">
    <source>
    </source>
</evidence>
<evidence type="ECO:0000305" key="5"/>
<evidence type="ECO:0000305" key="6">
    <source>
    </source>
</evidence>
<sequence>MSAEKEYILDEISQHTTTESCWLIIGNASNGGPKVYDVTKYLDDHPGGAEVMLDVAGQDADEFFEDIGHSKEARAELKNYLVGNFKIDAATLAKMKADAEAKAQQKNSGTGIMLIVLMALFAIAYGYYQTQMK</sequence>